<evidence type="ECO:0000250" key="1">
    <source>
        <dbReference type="UniProtKB" id="P32791"/>
    </source>
</evidence>
<evidence type="ECO:0000255" key="2"/>
<evidence type="ECO:0000255" key="3">
    <source>
        <dbReference type="PROSITE-ProRule" id="PRU00716"/>
    </source>
</evidence>
<evidence type="ECO:0000269" key="4">
    <source>
    </source>
</evidence>
<evidence type="ECO:0000305" key="5"/>
<gene>
    <name type="primary">frp2</name>
    <name type="ORF">SPBC947.05c</name>
</gene>
<dbReference type="EC" id="1.16.1.9" evidence="1"/>
<dbReference type="EMBL" id="CU329671">
    <property type="protein sequence ID" value="CAA17033.1"/>
    <property type="molecule type" value="Genomic_DNA"/>
</dbReference>
<dbReference type="PIR" id="T40777">
    <property type="entry name" value="T40777"/>
</dbReference>
<dbReference type="RefSeq" id="NP_595271.1">
    <property type="nucleotide sequence ID" value="NM_001021178.1"/>
</dbReference>
<dbReference type="SMR" id="O94727"/>
<dbReference type="BioGRID" id="277741">
    <property type="interactions" value="14"/>
</dbReference>
<dbReference type="FunCoup" id="O94727">
    <property type="interactions" value="226"/>
</dbReference>
<dbReference type="STRING" id="284812.O94727"/>
<dbReference type="TCDB" id="5.B.1.5.6">
    <property type="family name" value="the phagocyte (gp91(phox)) nadph oxidase family"/>
</dbReference>
<dbReference type="GlyCosmos" id="O94727">
    <property type="glycosylation" value="6 sites, No reported glycans"/>
</dbReference>
<dbReference type="SwissPalm" id="O94727"/>
<dbReference type="PaxDb" id="4896-SPBC947.05c.1"/>
<dbReference type="EnsemblFungi" id="SPBC947.05c.1">
    <property type="protein sequence ID" value="SPBC947.05c.1:pep"/>
    <property type="gene ID" value="SPBC947.05c"/>
</dbReference>
<dbReference type="GeneID" id="2541227"/>
<dbReference type="KEGG" id="spo:2541227"/>
<dbReference type="PomBase" id="SPBC947.05c">
    <property type="gene designation" value="frp2"/>
</dbReference>
<dbReference type="VEuPathDB" id="FungiDB:SPBC947.05c"/>
<dbReference type="eggNOG" id="KOG0039">
    <property type="taxonomic scope" value="Eukaryota"/>
</dbReference>
<dbReference type="HOGENOM" id="CLU_035348_0_0_1"/>
<dbReference type="InParanoid" id="O94727"/>
<dbReference type="OMA" id="KRPPHFR"/>
<dbReference type="PhylomeDB" id="O94727"/>
<dbReference type="PRO" id="PR:O94727"/>
<dbReference type="Proteomes" id="UP000002485">
    <property type="component" value="Chromosome II"/>
</dbReference>
<dbReference type="GO" id="GO:0005789">
    <property type="term" value="C:endoplasmic reticulum membrane"/>
    <property type="evidence" value="ECO:0007669"/>
    <property type="project" value="UniProtKB-SubCell"/>
</dbReference>
<dbReference type="GO" id="GO:0005886">
    <property type="term" value="C:plasma membrane"/>
    <property type="evidence" value="ECO:0000318"/>
    <property type="project" value="GO_Central"/>
</dbReference>
<dbReference type="GO" id="GO:0052851">
    <property type="term" value="F:ferric-chelate reductase (NADPH) activity"/>
    <property type="evidence" value="ECO:0007669"/>
    <property type="project" value="UniProtKB-EC"/>
</dbReference>
<dbReference type="GO" id="GO:0000293">
    <property type="term" value="F:ferric-chelate reductase activity"/>
    <property type="evidence" value="ECO:0000318"/>
    <property type="project" value="GO_Central"/>
</dbReference>
<dbReference type="GO" id="GO:0050660">
    <property type="term" value="F:flavin adenine dinucleotide binding"/>
    <property type="evidence" value="ECO:0000255"/>
    <property type="project" value="PomBase"/>
</dbReference>
<dbReference type="GO" id="GO:0005506">
    <property type="term" value="F:iron ion binding"/>
    <property type="evidence" value="ECO:0000255"/>
    <property type="project" value="PomBase"/>
</dbReference>
<dbReference type="GO" id="GO:0015677">
    <property type="term" value="P:copper ion import"/>
    <property type="evidence" value="ECO:0000266"/>
    <property type="project" value="PomBase"/>
</dbReference>
<dbReference type="GO" id="GO:0034755">
    <property type="term" value="P:iron ion transmembrane transport"/>
    <property type="evidence" value="ECO:0000266"/>
    <property type="project" value="PomBase"/>
</dbReference>
<dbReference type="GO" id="GO:0033215">
    <property type="term" value="P:reductive iron assimilation"/>
    <property type="evidence" value="ECO:0000318"/>
    <property type="project" value="GO_Central"/>
</dbReference>
<dbReference type="GO" id="GO:0015891">
    <property type="term" value="P:siderophore transport"/>
    <property type="evidence" value="ECO:0000250"/>
    <property type="project" value="PomBase"/>
</dbReference>
<dbReference type="CDD" id="cd06186">
    <property type="entry name" value="NOX_Duox_like_FAD_NADP"/>
    <property type="match status" value="1"/>
</dbReference>
<dbReference type="FunFam" id="3.40.50.80:FF:000074">
    <property type="entry name" value="Plasma membrane ferric-chelate reductase (Fre2), putative"/>
    <property type="match status" value="1"/>
</dbReference>
<dbReference type="Gene3D" id="3.40.50.80">
    <property type="entry name" value="Nucleotide-binding domain of ferredoxin-NADP reductase (FNR) module"/>
    <property type="match status" value="1"/>
</dbReference>
<dbReference type="InterPro" id="IPR000778">
    <property type="entry name" value="Cyt_b245_heavy_chain"/>
</dbReference>
<dbReference type="InterPro" id="IPR013112">
    <property type="entry name" value="FAD-bd_8"/>
</dbReference>
<dbReference type="InterPro" id="IPR017927">
    <property type="entry name" value="FAD-bd_FR_type"/>
</dbReference>
<dbReference type="InterPro" id="IPR013130">
    <property type="entry name" value="Fe3_Rdtase_TM_dom"/>
</dbReference>
<dbReference type="InterPro" id="IPR013121">
    <property type="entry name" value="Fe_red_NAD-bd_6"/>
</dbReference>
<dbReference type="InterPro" id="IPR051410">
    <property type="entry name" value="Ferric/Cupric_Reductase"/>
</dbReference>
<dbReference type="InterPro" id="IPR039261">
    <property type="entry name" value="FNR_nucleotide-bd"/>
</dbReference>
<dbReference type="InterPro" id="IPR017938">
    <property type="entry name" value="Riboflavin_synthase-like_b-brl"/>
</dbReference>
<dbReference type="PANTHER" id="PTHR32361">
    <property type="entry name" value="FERRIC/CUPRIC REDUCTASE TRANSMEMBRANE COMPONENT"/>
    <property type="match status" value="1"/>
</dbReference>
<dbReference type="PANTHER" id="PTHR32361:SF28">
    <property type="entry name" value="FRP1P"/>
    <property type="match status" value="1"/>
</dbReference>
<dbReference type="Pfam" id="PF08022">
    <property type="entry name" value="FAD_binding_8"/>
    <property type="match status" value="1"/>
</dbReference>
<dbReference type="Pfam" id="PF01794">
    <property type="entry name" value="Ferric_reduct"/>
    <property type="match status" value="1"/>
</dbReference>
<dbReference type="Pfam" id="PF08030">
    <property type="entry name" value="NAD_binding_6"/>
    <property type="match status" value="1"/>
</dbReference>
<dbReference type="PRINTS" id="PR00466">
    <property type="entry name" value="GP91PHOX"/>
</dbReference>
<dbReference type="SFLD" id="SFLDF00464">
    <property type="entry name" value="Ferric/cupric_reductase"/>
    <property type="match status" value="1"/>
</dbReference>
<dbReference type="SFLD" id="SFLDS00052">
    <property type="entry name" value="Ferric_Reductase_Domain"/>
    <property type="match status" value="1"/>
</dbReference>
<dbReference type="SFLD" id="SFLDG01168">
    <property type="entry name" value="Ferric_reductase_subgroup_(FRE"/>
    <property type="match status" value="1"/>
</dbReference>
<dbReference type="SUPFAM" id="SSF52343">
    <property type="entry name" value="Ferredoxin reductase-like, C-terminal NADP-linked domain"/>
    <property type="match status" value="1"/>
</dbReference>
<dbReference type="SUPFAM" id="SSF63380">
    <property type="entry name" value="Riboflavin synthase domain-like"/>
    <property type="match status" value="1"/>
</dbReference>
<dbReference type="PROSITE" id="PS51384">
    <property type="entry name" value="FAD_FR"/>
    <property type="match status" value="1"/>
</dbReference>
<keyword id="KW-1003">Cell membrane</keyword>
<keyword id="KW-0249">Electron transport</keyword>
<keyword id="KW-0256">Endoplasmic reticulum</keyword>
<keyword id="KW-0274">FAD</keyword>
<keyword id="KW-0285">Flavoprotein</keyword>
<keyword id="KW-0325">Glycoprotein</keyword>
<keyword id="KW-0349">Heme</keyword>
<keyword id="KW-0406">Ion transport</keyword>
<keyword id="KW-0408">Iron</keyword>
<keyword id="KW-0410">Iron transport</keyword>
<keyword id="KW-0472">Membrane</keyword>
<keyword id="KW-0479">Metal-binding</keyword>
<keyword id="KW-0521">NADP</keyword>
<keyword id="KW-0560">Oxidoreductase</keyword>
<keyword id="KW-1185">Reference proteome</keyword>
<keyword id="KW-0812">Transmembrane</keyword>
<keyword id="KW-1133">Transmembrane helix</keyword>
<keyword id="KW-0813">Transport</keyword>
<sequence length="564" mass="65262">MILARDDKWTLGSIALIFVLLIGFALLFLLERFRVKEKSRTFKDCVNVYQCPSKGERVYLALRHWFIFLATHKAQMTLILSPLVMLVTIPFTGKETKNSIASYDWNLTGVAARLGYLSCGLFFVSYFFSLKNNPFCLMLFSSHEKMNYLHRWLSVYAVLISVLHGILFMIFSAQSYKPLLYDKISIYGYFITVVLFLMTVASLPSVRRKFFEWFFVLHHTCSVLIIFLIWLHHPRTIVYMKACIIIYAFDRGCRLFRSIWNRSNFRIYLLNEDMIYMVGRKPKRSFFALPWAAGSHVYINIPSLSYWQVHPFTLASAPFDDFIELFVAVHSGFTERLANRLYSMPHEYPNFSLAPGTPESLSNTYRELNSFKSYAVEIENTAQGHTYEPEDLYLETTVFMDGPYGTTSNVFKEYSYVLLIAGGVGFSYTLPILRDLILKECNVTSITFIWSCRSLSLLKVASKSLNSLLHQSNVRLKIINHFTGSISCKESSEFSNQTTENSEMEFFDDRPDLDMYIQKFFDYVGYQTAALAACGSQSFLKRIKNSVNKSISSTTDIYQHYEEL</sequence>
<comment type="function">
    <text evidence="1">Metalloreductase responsible for reducing extracellular iron and copper prior to import (By similarity). Catalyzes the reductive uptake of Fe(3+)-salts and Fe(3+) bound to catecholate or hydroxamate siderophores (By similarity). Fe(3+) is reduced to Fe(2+), which then dissociates from the siderophore and can be imported by the high-affinity Fe(2+) transport complex in the plasma membrane (By similarity). Also participates in Cu(2+) reduction and Cu(+) uptake (By similarity).</text>
</comment>
<comment type="catalytic activity">
    <reaction evidence="1">
        <text>2 a Fe(II)-siderophore + NADP(+) + H(+) = 2 a Fe(III)-siderophore + NADPH</text>
        <dbReference type="Rhea" id="RHEA:28795"/>
        <dbReference type="Rhea" id="RHEA-COMP:11342"/>
        <dbReference type="Rhea" id="RHEA-COMP:11344"/>
        <dbReference type="ChEBI" id="CHEBI:15378"/>
        <dbReference type="ChEBI" id="CHEBI:29033"/>
        <dbReference type="ChEBI" id="CHEBI:29034"/>
        <dbReference type="ChEBI" id="CHEBI:57783"/>
        <dbReference type="ChEBI" id="CHEBI:58349"/>
        <dbReference type="EC" id="1.16.1.9"/>
    </reaction>
</comment>
<comment type="cofactor">
    <cofactor evidence="1">
        <name>FAD</name>
        <dbReference type="ChEBI" id="CHEBI:57692"/>
    </cofactor>
</comment>
<comment type="cofactor">
    <cofactor evidence="1">
        <name>heme</name>
        <dbReference type="ChEBI" id="CHEBI:30413"/>
    </cofactor>
</comment>
<comment type="subcellular location">
    <subcellularLocation>
        <location evidence="1">Cell membrane</location>
        <topology evidence="2">Multi-pass membrane protein</topology>
    </subcellularLocation>
    <subcellularLocation>
        <location evidence="4">Endoplasmic reticulum membrane</location>
        <topology evidence="2">Multi-pass membrane protein</topology>
    </subcellularLocation>
</comment>
<comment type="similarity">
    <text evidence="5">Belongs to the ferric reductase (FRE) family.</text>
</comment>
<protein>
    <recommendedName>
        <fullName evidence="5">Ferric/cupric reductase transmembrane component 2</fullName>
        <ecNumber evidence="1">1.16.1.9</ecNumber>
    </recommendedName>
    <alternativeName>
        <fullName evidence="5">Ferric-chelate reductase 2</fullName>
    </alternativeName>
</protein>
<reference key="1">
    <citation type="journal article" date="2002" name="Nature">
        <title>The genome sequence of Schizosaccharomyces pombe.</title>
        <authorList>
            <person name="Wood V."/>
            <person name="Gwilliam R."/>
            <person name="Rajandream M.A."/>
            <person name="Lyne M.H."/>
            <person name="Lyne R."/>
            <person name="Stewart A."/>
            <person name="Sgouros J.G."/>
            <person name="Peat N."/>
            <person name="Hayles J."/>
            <person name="Baker S.G."/>
            <person name="Basham D."/>
            <person name="Bowman S."/>
            <person name="Brooks K."/>
            <person name="Brown D."/>
            <person name="Brown S."/>
            <person name="Chillingworth T."/>
            <person name="Churcher C.M."/>
            <person name="Collins M."/>
            <person name="Connor R."/>
            <person name="Cronin A."/>
            <person name="Davis P."/>
            <person name="Feltwell T."/>
            <person name="Fraser A."/>
            <person name="Gentles S."/>
            <person name="Goble A."/>
            <person name="Hamlin N."/>
            <person name="Harris D.E."/>
            <person name="Hidalgo J."/>
            <person name="Hodgson G."/>
            <person name="Holroyd S."/>
            <person name="Hornsby T."/>
            <person name="Howarth S."/>
            <person name="Huckle E.J."/>
            <person name="Hunt S."/>
            <person name="Jagels K."/>
            <person name="James K.D."/>
            <person name="Jones L."/>
            <person name="Jones M."/>
            <person name="Leather S."/>
            <person name="McDonald S."/>
            <person name="McLean J."/>
            <person name="Mooney P."/>
            <person name="Moule S."/>
            <person name="Mungall K.L."/>
            <person name="Murphy L.D."/>
            <person name="Niblett D."/>
            <person name="Odell C."/>
            <person name="Oliver K."/>
            <person name="O'Neil S."/>
            <person name="Pearson D."/>
            <person name="Quail M.A."/>
            <person name="Rabbinowitsch E."/>
            <person name="Rutherford K.M."/>
            <person name="Rutter S."/>
            <person name="Saunders D."/>
            <person name="Seeger K."/>
            <person name="Sharp S."/>
            <person name="Skelton J."/>
            <person name="Simmonds M.N."/>
            <person name="Squares R."/>
            <person name="Squares S."/>
            <person name="Stevens K."/>
            <person name="Taylor K."/>
            <person name="Taylor R.G."/>
            <person name="Tivey A."/>
            <person name="Walsh S.V."/>
            <person name="Warren T."/>
            <person name="Whitehead S."/>
            <person name="Woodward J.R."/>
            <person name="Volckaert G."/>
            <person name="Aert R."/>
            <person name="Robben J."/>
            <person name="Grymonprez B."/>
            <person name="Weltjens I."/>
            <person name="Vanstreels E."/>
            <person name="Rieger M."/>
            <person name="Schaefer M."/>
            <person name="Mueller-Auer S."/>
            <person name="Gabel C."/>
            <person name="Fuchs M."/>
            <person name="Duesterhoeft A."/>
            <person name="Fritzc C."/>
            <person name="Holzer E."/>
            <person name="Moestl D."/>
            <person name="Hilbert H."/>
            <person name="Borzym K."/>
            <person name="Langer I."/>
            <person name="Beck A."/>
            <person name="Lehrach H."/>
            <person name="Reinhardt R."/>
            <person name="Pohl T.M."/>
            <person name="Eger P."/>
            <person name="Zimmermann W."/>
            <person name="Wedler H."/>
            <person name="Wambutt R."/>
            <person name="Purnelle B."/>
            <person name="Goffeau A."/>
            <person name="Cadieu E."/>
            <person name="Dreano S."/>
            <person name="Gloux S."/>
            <person name="Lelaure V."/>
            <person name="Mottier S."/>
            <person name="Galibert F."/>
            <person name="Aves S.J."/>
            <person name="Xiang Z."/>
            <person name="Hunt C."/>
            <person name="Moore K."/>
            <person name="Hurst S.M."/>
            <person name="Lucas M."/>
            <person name="Rochet M."/>
            <person name="Gaillardin C."/>
            <person name="Tallada V.A."/>
            <person name="Garzon A."/>
            <person name="Thode G."/>
            <person name="Daga R.R."/>
            <person name="Cruzado L."/>
            <person name="Jimenez J."/>
            <person name="Sanchez M."/>
            <person name="del Rey F."/>
            <person name="Benito J."/>
            <person name="Dominguez A."/>
            <person name="Revuelta J.L."/>
            <person name="Moreno S."/>
            <person name="Armstrong J."/>
            <person name="Forsburg S.L."/>
            <person name="Cerutti L."/>
            <person name="Lowe T."/>
            <person name="McCombie W.R."/>
            <person name="Paulsen I."/>
            <person name="Potashkin J."/>
            <person name="Shpakovski G.V."/>
            <person name="Ussery D."/>
            <person name="Barrell B.G."/>
            <person name="Nurse P."/>
        </authorList>
    </citation>
    <scope>NUCLEOTIDE SEQUENCE [LARGE SCALE GENOMIC DNA]</scope>
    <source>
        <strain>972 / ATCC 24843</strain>
    </source>
</reference>
<reference key="2">
    <citation type="journal article" date="2006" name="Nat. Biotechnol.">
        <title>ORFeome cloning and global analysis of protein localization in the fission yeast Schizosaccharomyces pombe.</title>
        <authorList>
            <person name="Matsuyama A."/>
            <person name="Arai R."/>
            <person name="Yashiroda Y."/>
            <person name="Shirai A."/>
            <person name="Kamata A."/>
            <person name="Sekido S."/>
            <person name="Kobayashi Y."/>
            <person name="Hashimoto A."/>
            <person name="Hamamoto M."/>
            <person name="Hiraoka Y."/>
            <person name="Horinouchi S."/>
            <person name="Yoshida M."/>
        </authorList>
    </citation>
    <scope>SUBCELLULAR LOCATION [LARGE SCALE ANALYSIS]</scope>
</reference>
<accession>O94727</accession>
<organism>
    <name type="scientific">Schizosaccharomyces pombe (strain 972 / ATCC 24843)</name>
    <name type="common">Fission yeast</name>
    <dbReference type="NCBI Taxonomy" id="284812"/>
    <lineage>
        <taxon>Eukaryota</taxon>
        <taxon>Fungi</taxon>
        <taxon>Dikarya</taxon>
        <taxon>Ascomycota</taxon>
        <taxon>Taphrinomycotina</taxon>
        <taxon>Schizosaccharomycetes</taxon>
        <taxon>Schizosaccharomycetales</taxon>
        <taxon>Schizosaccharomycetaceae</taxon>
        <taxon>Schizosaccharomyces</taxon>
    </lineage>
</organism>
<feature type="chain" id="PRO_0000337260" description="Ferric/cupric reductase transmembrane component 2">
    <location>
        <begin position="1"/>
        <end position="564"/>
    </location>
</feature>
<feature type="transmembrane region" description="Helical" evidence="2">
    <location>
        <begin position="10"/>
        <end position="30"/>
    </location>
</feature>
<feature type="transmembrane region" description="Helical" evidence="2">
    <location>
        <begin position="66"/>
        <end position="86"/>
    </location>
</feature>
<feature type="transmembrane region" description="Helical" evidence="2">
    <location>
        <begin position="110"/>
        <end position="130"/>
    </location>
</feature>
<feature type="transmembrane region" description="Helical" evidence="2">
    <location>
        <begin position="152"/>
        <end position="172"/>
    </location>
</feature>
<feature type="transmembrane region" description="Helical" evidence="2">
    <location>
        <begin position="184"/>
        <end position="204"/>
    </location>
</feature>
<feature type="transmembrane region" description="Helical" evidence="2">
    <location>
        <begin position="210"/>
        <end position="230"/>
    </location>
</feature>
<feature type="domain" description="Ferric oxidoreductase" evidence="2">
    <location>
        <begin position="114"/>
        <end position="229"/>
    </location>
</feature>
<feature type="domain" description="FAD-binding FR-type" evidence="3">
    <location>
        <begin position="254"/>
        <end position="410"/>
    </location>
</feature>
<feature type="binding site" description="axial binding residue" evidence="1">
    <location>
        <position position="150"/>
    </location>
    <ligand>
        <name>heme</name>
        <dbReference type="ChEBI" id="CHEBI:30413"/>
        <label>1</label>
    </ligand>
    <ligandPart>
        <name>Fe</name>
        <dbReference type="ChEBI" id="CHEBI:18248"/>
    </ligandPart>
</feature>
<feature type="binding site" description="axial binding residue" evidence="1">
    <location>
        <position position="164"/>
    </location>
    <ligand>
        <name>heme</name>
        <dbReference type="ChEBI" id="CHEBI:30413"/>
        <label>2</label>
    </ligand>
    <ligandPart>
        <name>Fe</name>
        <dbReference type="ChEBI" id="CHEBI:18248"/>
    </ligandPart>
</feature>
<feature type="binding site" description="axial binding residue" evidence="1">
    <location>
        <position position="218"/>
    </location>
    <ligand>
        <name>heme</name>
        <dbReference type="ChEBI" id="CHEBI:30413"/>
        <label>1</label>
    </ligand>
    <ligandPart>
        <name>Fe</name>
        <dbReference type="ChEBI" id="CHEBI:18248"/>
    </ligandPart>
</feature>
<feature type="binding site" description="axial binding residue" evidence="1">
    <location>
        <position position="232"/>
    </location>
    <ligand>
        <name>heme</name>
        <dbReference type="ChEBI" id="CHEBI:30413"/>
        <label>2</label>
    </ligand>
    <ligandPart>
        <name>Fe</name>
        <dbReference type="ChEBI" id="CHEBI:18248"/>
    </ligandPart>
</feature>
<feature type="binding site" evidence="2">
    <location>
        <begin position="310"/>
        <end position="316"/>
    </location>
    <ligand>
        <name>FAD</name>
        <dbReference type="ChEBI" id="CHEBI:57692"/>
    </ligand>
</feature>
<feature type="binding site" evidence="2">
    <location>
        <begin position="419"/>
        <end position="427"/>
    </location>
    <ligand>
        <name>NAD(+)</name>
        <dbReference type="ChEBI" id="CHEBI:57540"/>
    </ligand>
</feature>
<feature type="glycosylation site" description="N-linked (GlcNAc...) asparagine" evidence="2">
    <location>
        <position position="106"/>
    </location>
</feature>
<feature type="glycosylation site" description="N-linked (GlcNAc...) asparagine" evidence="2">
    <location>
        <position position="261"/>
    </location>
</feature>
<feature type="glycosylation site" description="N-linked (GlcNAc...) asparagine" evidence="2">
    <location>
        <position position="350"/>
    </location>
</feature>
<feature type="glycosylation site" description="N-linked (GlcNAc...) asparagine" evidence="2">
    <location>
        <position position="442"/>
    </location>
</feature>
<feature type="glycosylation site" description="N-linked (GlcNAc...) asparagine" evidence="2">
    <location>
        <position position="496"/>
    </location>
</feature>
<feature type="glycosylation site" description="N-linked (GlcNAc...) asparagine" evidence="2">
    <location>
        <position position="548"/>
    </location>
</feature>
<name>FRP2_SCHPO</name>
<proteinExistence type="inferred from homology"/>